<dbReference type="EC" id="7.2.2.10"/>
<dbReference type="EMBL" id="AAAB01008960">
    <property type="protein sequence ID" value="EAA10790.5"/>
    <property type="molecule type" value="Genomic_DNA"/>
</dbReference>
<dbReference type="EMBL" id="AAAB01008960">
    <property type="protein sequence ID" value="EDO63821.1"/>
    <property type="molecule type" value="Genomic_DNA"/>
</dbReference>
<dbReference type="EMBL" id="AAAB01008960">
    <property type="protein sequence ID" value="EDO63822.1"/>
    <property type="molecule type" value="Genomic_DNA"/>
</dbReference>
<dbReference type="EMBL" id="AAAB01008960">
    <property type="protein sequence ID" value="EDO63823.1"/>
    <property type="molecule type" value="Genomic_DNA"/>
</dbReference>
<dbReference type="EMBL" id="AAAB01008960">
    <property type="protein sequence ID" value="EDO63824.1"/>
    <property type="molecule type" value="Genomic_DNA"/>
</dbReference>
<dbReference type="RefSeq" id="XP_001688815.1">
    <molecule id="Q7PPA5-1"/>
    <property type="nucleotide sequence ID" value="XM_001688763.1"/>
</dbReference>
<dbReference type="RefSeq" id="XP_001688816.1">
    <molecule id="Q7PPA5-3"/>
    <property type="nucleotide sequence ID" value="XM_001688764.1"/>
</dbReference>
<dbReference type="RefSeq" id="XP_001688817.1">
    <molecule id="Q7PPA5-2"/>
    <property type="nucleotide sequence ID" value="XM_001688765.1"/>
</dbReference>
<dbReference type="RefSeq" id="XP_001688818.1">
    <molecule id="Q7PPA5-1"/>
    <property type="nucleotide sequence ID" value="XM_001688766.1"/>
</dbReference>
<dbReference type="RefSeq" id="XP_316251.4">
    <molecule id="Q7PPA5-1"/>
    <property type="nucleotide sequence ID" value="XM_316251.4"/>
</dbReference>
<dbReference type="SMR" id="Q7PPA5"/>
<dbReference type="FunCoup" id="Q7PPA5">
    <property type="interactions" value="1102"/>
</dbReference>
<dbReference type="STRING" id="7165.Q7PPA5"/>
<dbReference type="PaxDb" id="7165-AGAP006186-PC"/>
<dbReference type="EnsemblMetazoa" id="AGAP006186-RA">
    <molecule id="Q7PPA5-2"/>
    <property type="protein sequence ID" value="AGAP006186-PA"/>
    <property type="gene ID" value="AGAP006186"/>
</dbReference>
<dbReference type="EnsemblMetazoa" id="AGAP006186-RB">
    <molecule id="Q7PPA5-3"/>
    <property type="protein sequence ID" value="AGAP006186-PB"/>
    <property type="gene ID" value="AGAP006186"/>
</dbReference>
<dbReference type="EnsemblMetazoa" id="AGAP006186-RC">
    <molecule id="Q7PPA5-1"/>
    <property type="protein sequence ID" value="AGAP006186-PC"/>
    <property type="gene ID" value="AGAP006186"/>
</dbReference>
<dbReference type="EnsemblMetazoa" id="AGAP006186-RD">
    <molecule id="Q7PPA5-1"/>
    <property type="protein sequence ID" value="AGAP006186-PD"/>
    <property type="gene ID" value="AGAP006186"/>
</dbReference>
<dbReference type="EnsemblMetazoa" id="AGAP006186-RE">
    <molecule id="Q7PPA5-1"/>
    <property type="protein sequence ID" value="AGAP006186-PE"/>
    <property type="gene ID" value="AGAP006186"/>
</dbReference>
<dbReference type="GeneID" id="1276852"/>
<dbReference type="KEGG" id="aga:1276852"/>
<dbReference type="CTD" id="49297"/>
<dbReference type="VEuPathDB" id="VectorBase:AGAMI1_000243"/>
<dbReference type="VEuPathDB" id="VectorBase:AGAP006186"/>
<dbReference type="eggNOG" id="KOG0202">
    <property type="taxonomic scope" value="Eukaryota"/>
</dbReference>
<dbReference type="InParanoid" id="Q7PPA5"/>
<dbReference type="OMA" id="PLWNNMM"/>
<dbReference type="OrthoDB" id="3352408at2759"/>
<dbReference type="PhylomeDB" id="Q7PPA5"/>
<dbReference type="Proteomes" id="UP000007062">
    <property type="component" value="Chromosome 2L"/>
</dbReference>
<dbReference type="GO" id="GO:0016020">
    <property type="term" value="C:membrane"/>
    <property type="evidence" value="ECO:0000318"/>
    <property type="project" value="GO_Central"/>
</dbReference>
<dbReference type="GO" id="GO:0033017">
    <property type="term" value="C:sarcoplasmic reticulum membrane"/>
    <property type="evidence" value="ECO:0007669"/>
    <property type="project" value="UniProtKB-SubCell"/>
</dbReference>
<dbReference type="GO" id="GO:0005524">
    <property type="term" value="F:ATP binding"/>
    <property type="evidence" value="ECO:0007669"/>
    <property type="project" value="UniProtKB-KW"/>
</dbReference>
<dbReference type="GO" id="GO:0016887">
    <property type="term" value="F:ATP hydrolysis activity"/>
    <property type="evidence" value="ECO:0007669"/>
    <property type="project" value="InterPro"/>
</dbReference>
<dbReference type="GO" id="GO:0046872">
    <property type="term" value="F:metal ion binding"/>
    <property type="evidence" value="ECO:0007669"/>
    <property type="project" value="UniProtKB-KW"/>
</dbReference>
<dbReference type="GO" id="GO:0005388">
    <property type="term" value="F:P-type calcium transporter activity"/>
    <property type="evidence" value="ECO:0000318"/>
    <property type="project" value="GO_Central"/>
</dbReference>
<dbReference type="GO" id="GO:0070588">
    <property type="term" value="P:calcium ion transmembrane transport"/>
    <property type="evidence" value="ECO:0000318"/>
    <property type="project" value="GO_Central"/>
</dbReference>
<dbReference type="GO" id="GO:0006874">
    <property type="term" value="P:intracellular calcium ion homeostasis"/>
    <property type="evidence" value="ECO:0000318"/>
    <property type="project" value="GO_Central"/>
</dbReference>
<dbReference type="CDD" id="cd02083">
    <property type="entry name" value="P-type_ATPase_SERCA"/>
    <property type="match status" value="1"/>
</dbReference>
<dbReference type="FunFam" id="2.70.150.10:FF:000143">
    <property type="entry name" value="Calcium-transporting ATPase"/>
    <property type="match status" value="1"/>
</dbReference>
<dbReference type="FunFam" id="3.40.1110.10:FF:000003">
    <property type="entry name" value="Calcium-transporting ATPase"/>
    <property type="match status" value="1"/>
</dbReference>
<dbReference type="FunFam" id="3.40.50.1000:FF:000005">
    <property type="entry name" value="Calcium-transporting ATPase 1"/>
    <property type="match status" value="1"/>
</dbReference>
<dbReference type="FunFam" id="1.20.1110.10:FF:000065">
    <property type="entry name" value="Sarcoplasmic/endoplasmic reticulum calcium ATPase 1"/>
    <property type="match status" value="2"/>
</dbReference>
<dbReference type="Gene3D" id="3.40.1110.10">
    <property type="entry name" value="Calcium-transporting ATPase, cytoplasmic domain N"/>
    <property type="match status" value="1"/>
</dbReference>
<dbReference type="Gene3D" id="2.70.150.10">
    <property type="entry name" value="Calcium-transporting ATPase, cytoplasmic transduction domain A"/>
    <property type="match status" value="1"/>
</dbReference>
<dbReference type="Gene3D" id="1.20.1110.10">
    <property type="entry name" value="Calcium-transporting ATPase, transmembrane domain"/>
    <property type="match status" value="1"/>
</dbReference>
<dbReference type="Gene3D" id="3.40.50.1000">
    <property type="entry name" value="HAD superfamily/HAD-like"/>
    <property type="match status" value="1"/>
</dbReference>
<dbReference type="InterPro" id="IPR006068">
    <property type="entry name" value="ATPase_P-typ_cation-transptr_C"/>
</dbReference>
<dbReference type="InterPro" id="IPR004014">
    <property type="entry name" value="ATPase_P-typ_cation-transptr_N"/>
</dbReference>
<dbReference type="InterPro" id="IPR023299">
    <property type="entry name" value="ATPase_P-typ_cyto_dom_N"/>
</dbReference>
<dbReference type="InterPro" id="IPR018303">
    <property type="entry name" value="ATPase_P-typ_P_site"/>
</dbReference>
<dbReference type="InterPro" id="IPR023298">
    <property type="entry name" value="ATPase_P-typ_TM_dom_sf"/>
</dbReference>
<dbReference type="InterPro" id="IPR008250">
    <property type="entry name" value="ATPase_P-typ_transduc_dom_A_sf"/>
</dbReference>
<dbReference type="InterPro" id="IPR036412">
    <property type="entry name" value="HAD-like_sf"/>
</dbReference>
<dbReference type="InterPro" id="IPR023214">
    <property type="entry name" value="HAD_sf"/>
</dbReference>
<dbReference type="InterPro" id="IPR005782">
    <property type="entry name" value="P-type_ATPase_IIA"/>
</dbReference>
<dbReference type="InterPro" id="IPR001757">
    <property type="entry name" value="P_typ_ATPase"/>
</dbReference>
<dbReference type="InterPro" id="IPR044492">
    <property type="entry name" value="P_typ_ATPase_HD_dom"/>
</dbReference>
<dbReference type="NCBIfam" id="TIGR01116">
    <property type="entry name" value="ATPase-IIA1_Ca"/>
    <property type="match status" value="1"/>
</dbReference>
<dbReference type="NCBIfam" id="TIGR01494">
    <property type="entry name" value="ATPase_P-type"/>
    <property type="match status" value="3"/>
</dbReference>
<dbReference type="PANTHER" id="PTHR42861">
    <property type="entry name" value="CALCIUM-TRANSPORTING ATPASE"/>
    <property type="match status" value="1"/>
</dbReference>
<dbReference type="Pfam" id="PF13246">
    <property type="entry name" value="Cation_ATPase"/>
    <property type="match status" value="1"/>
</dbReference>
<dbReference type="Pfam" id="PF00689">
    <property type="entry name" value="Cation_ATPase_C"/>
    <property type="match status" value="1"/>
</dbReference>
<dbReference type="Pfam" id="PF00690">
    <property type="entry name" value="Cation_ATPase_N"/>
    <property type="match status" value="1"/>
</dbReference>
<dbReference type="Pfam" id="PF00122">
    <property type="entry name" value="E1-E2_ATPase"/>
    <property type="match status" value="1"/>
</dbReference>
<dbReference type="Pfam" id="PF00702">
    <property type="entry name" value="Hydrolase"/>
    <property type="match status" value="1"/>
</dbReference>
<dbReference type="PRINTS" id="PR00119">
    <property type="entry name" value="CATATPASE"/>
</dbReference>
<dbReference type="SFLD" id="SFLDS00003">
    <property type="entry name" value="Haloacid_Dehalogenase"/>
    <property type="match status" value="1"/>
</dbReference>
<dbReference type="SFLD" id="SFLDF00027">
    <property type="entry name" value="p-type_atpase"/>
    <property type="match status" value="1"/>
</dbReference>
<dbReference type="SMART" id="SM00831">
    <property type="entry name" value="Cation_ATPase_N"/>
    <property type="match status" value="1"/>
</dbReference>
<dbReference type="SUPFAM" id="SSF81653">
    <property type="entry name" value="Calcium ATPase, transduction domain A"/>
    <property type="match status" value="1"/>
</dbReference>
<dbReference type="SUPFAM" id="SSF81665">
    <property type="entry name" value="Calcium ATPase, transmembrane domain M"/>
    <property type="match status" value="1"/>
</dbReference>
<dbReference type="SUPFAM" id="SSF56784">
    <property type="entry name" value="HAD-like"/>
    <property type="match status" value="1"/>
</dbReference>
<dbReference type="SUPFAM" id="SSF81660">
    <property type="entry name" value="Metal cation-transporting ATPase, ATP-binding domain N"/>
    <property type="match status" value="1"/>
</dbReference>
<dbReference type="PROSITE" id="PS00154">
    <property type="entry name" value="ATPASE_E1_E2"/>
    <property type="match status" value="1"/>
</dbReference>
<name>ATC1_ANOGA</name>
<gene>
    <name evidence="3" type="primary">SERCA</name>
    <name evidence="3" type="synonym">Ca-P60A</name>
    <name type="ORF">AGAP006186</name>
</gene>
<reference evidence="4" key="1">
    <citation type="journal article" date="2002" name="Science">
        <title>The genome sequence of the malaria mosquito Anopheles gambiae.</title>
        <authorList>
            <person name="Holt R.A."/>
            <person name="Subramanian G.M."/>
            <person name="Halpern A."/>
            <person name="Sutton G.G."/>
            <person name="Charlab R."/>
            <person name="Nusskern D.R."/>
            <person name="Wincker P."/>
            <person name="Clark A.G."/>
            <person name="Ribeiro J.M.C."/>
            <person name="Wides R."/>
            <person name="Salzberg S.L."/>
            <person name="Loftus B.J."/>
            <person name="Yandell M.D."/>
            <person name="Majoros W.H."/>
            <person name="Rusch D.B."/>
            <person name="Lai Z."/>
            <person name="Kraft C.L."/>
            <person name="Abril J.F."/>
            <person name="Anthouard V."/>
            <person name="Arensburger P."/>
            <person name="Atkinson P.W."/>
            <person name="Baden H."/>
            <person name="de Berardinis V."/>
            <person name="Baldwin D."/>
            <person name="Benes V."/>
            <person name="Biedler J."/>
            <person name="Blass C."/>
            <person name="Bolanos R."/>
            <person name="Boscus D."/>
            <person name="Barnstead M."/>
            <person name="Cai S."/>
            <person name="Center A."/>
            <person name="Chaturverdi K."/>
            <person name="Christophides G.K."/>
            <person name="Chrystal M.A.M."/>
            <person name="Clamp M."/>
            <person name="Cravchik A."/>
            <person name="Curwen V."/>
            <person name="Dana A."/>
            <person name="Delcher A."/>
            <person name="Dew I."/>
            <person name="Evans C.A."/>
            <person name="Flanigan M."/>
            <person name="Grundschober-Freimoser A."/>
            <person name="Friedli L."/>
            <person name="Gu Z."/>
            <person name="Guan P."/>
            <person name="Guigo R."/>
            <person name="Hillenmeyer M.E."/>
            <person name="Hladun S.L."/>
            <person name="Hogan J.R."/>
            <person name="Hong Y.S."/>
            <person name="Hoover J."/>
            <person name="Jaillon O."/>
            <person name="Ke Z."/>
            <person name="Kodira C.D."/>
            <person name="Kokoza E."/>
            <person name="Koutsos A."/>
            <person name="Letunic I."/>
            <person name="Levitsky A.A."/>
            <person name="Liang Y."/>
            <person name="Lin J.-J."/>
            <person name="Lobo N.F."/>
            <person name="Lopez J.R."/>
            <person name="Malek J.A."/>
            <person name="McIntosh T.C."/>
            <person name="Meister S."/>
            <person name="Miller J.R."/>
            <person name="Mobarry C."/>
            <person name="Mongin E."/>
            <person name="Murphy S.D."/>
            <person name="O'Brochta D.A."/>
            <person name="Pfannkoch C."/>
            <person name="Qi R."/>
            <person name="Regier M.A."/>
            <person name="Remington K."/>
            <person name="Shao H."/>
            <person name="Sharakhova M.V."/>
            <person name="Sitter C.D."/>
            <person name="Shetty J."/>
            <person name="Smith T.J."/>
            <person name="Strong R."/>
            <person name="Sun J."/>
            <person name="Thomasova D."/>
            <person name="Ton L.Q."/>
            <person name="Topalis P."/>
            <person name="Tu Z.J."/>
            <person name="Unger M.F."/>
            <person name="Walenz B."/>
            <person name="Wang A.H."/>
            <person name="Wang J."/>
            <person name="Wang M."/>
            <person name="Wang X."/>
            <person name="Woodford K.J."/>
            <person name="Wortman J.R."/>
            <person name="Wu M."/>
            <person name="Yao A."/>
            <person name="Zdobnov E.M."/>
            <person name="Zhang H."/>
            <person name="Zhao Q."/>
            <person name="Zhao S."/>
            <person name="Zhu S.C."/>
            <person name="Zhimulev I."/>
            <person name="Coluzzi M."/>
            <person name="della Torre A."/>
            <person name="Roth C.W."/>
            <person name="Louis C."/>
            <person name="Kalush F."/>
            <person name="Mural R.J."/>
            <person name="Myers E.W."/>
            <person name="Adams M.D."/>
            <person name="Smith H.O."/>
            <person name="Broder S."/>
            <person name="Gardner M.J."/>
            <person name="Fraser C.M."/>
            <person name="Birney E."/>
            <person name="Bork P."/>
            <person name="Brey P.T."/>
            <person name="Venter J.C."/>
            <person name="Weissenbach J."/>
            <person name="Kafatos F.C."/>
            <person name="Collins F.H."/>
            <person name="Hoffman S.L."/>
        </authorList>
    </citation>
    <scope>NUCLEOTIDE SEQUENCE [LARGE SCALE GENOMIC DNA]</scope>
    <source>
        <strain>PEST</strain>
    </source>
</reference>
<sequence length="1018" mass="111859">MEDGHSKTVDEVLSHFRVDPERGLSLDQVKEYQKKYGPNELPAEEGKTLWQLVLEQFDDLLVKILLLAAIISFVLALFEEHEGVEAFVEPFVILLILIANAVVGVWQERNAESAIEALKEYEPEMGKVIRGDKSGVQKIRAKEIVPGDVVEVSVGDKIPADIRLIKIYSTTIRIDQSILTGESVSVIKHTDAVPDPRAVNQDKKNILFSGTNVAAGKARGVVIGTGLNTAIGKIRTEMSETEEIKTPLQQKLDEFGEQLSKVISLICVAVWAINIGHFNDPAHGGSWIKGAVYYFKIAVALAVAAIPEGLPAVITTCLALGTRRMAKKNAIVRSLPSVETLGCTSVICSDKTGTLTTNQMSVSRMFIFEKIEGNDSSFTEFEISGSTYEPIGEVTLNGQRIKAADYETLHELGTICIMCNDSAIDFNETKKVFEKVGEATETALIVLAEKLNPFNVAKQGLDRRSSAICVRQEIETKWKKEFTLEFSRDRKSMSSYCTPLKASKLGNGPKLFCKGAPEGVLERCTHARVGSTKVPLTQTLKQRILDLTRTYGTGRDTLRCLALATADSPMKPDDMDLNDSTKFYTYEVNLTFVGVVGMLDPPRKEVQDSIVRCRAAGIRVIVITGDNKATAEAICRRIGVFGEDEDTTGKSYSGREFDDLSVSEQREACSRARLFSRVEPAHKSKIVEFLQSMNEISAMTGDGVNDAPALKKAEIGIAMGSGTAVAKSAAEMVLADDNFSSIVAAVEEGRAIYNNMKQFIRYLISSNIGEVVSIFLTAALGLPEALIPVQLLWVNLVTDGLPATALGFNPPDLDIMTKPPRKADEGLISGWLFFRYMAIGGYVGCATVGGAAWWFMFSETGPQLSYWQLTHHLSCLGGGEEFKGIDCKIFNDPHPMTMALSVLVTIEMLNAMNSLSENQSLVQMPPWCNIWLIASMCLSFALHFVILYVDVLSTVFQVTPLDGNEWMTVMKFSLPVVLLDEILKFVARRISDGESYIKNMHGLVLAWAVFFAYIIWGP</sequence>
<protein>
    <recommendedName>
        <fullName>Calcium-transporting ATPase sarcoplasmic/endoplasmic reticulum type</fullName>
        <ecNumber>7.2.2.10</ecNumber>
    </recommendedName>
    <alternativeName>
        <fullName>Calcium pump</fullName>
    </alternativeName>
    <alternativeName>
        <fullName evidence="3">Sarcoplasmic/endoplasmic reticulum Ca(2+)-ATPase</fullName>
    </alternativeName>
</protein>
<organism>
    <name type="scientific">Anopheles gambiae</name>
    <name type="common">African malaria mosquito</name>
    <dbReference type="NCBI Taxonomy" id="7165"/>
    <lineage>
        <taxon>Eukaryota</taxon>
        <taxon>Metazoa</taxon>
        <taxon>Ecdysozoa</taxon>
        <taxon>Arthropoda</taxon>
        <taxon>Hexapoda</taxon>
        <taxon>Insecta</taxon>
        <taxon>Pterygota</taxon>
        <taxon>Neoptera</taxon>
        <taxon>Endopterygota</taxon>
        <taxon>Diptera</taxon>
        <taxon>Nematocera</taxon>
        <taxon>Culicoidea</taxon>
        <taxon>Culicidae</taxon>
        <taxon>Anophelinae</taxon>
        <taxon>Anopheles</taxon>
    </lineage>
</organism>
<proteinExistence type="inferred from homology"/>
<comment type="function">
    <text evidence="4">This magnesium-dependent enzyme catalyzes the hydrolysis of ATP coupled with the transport of calcium.</text>
</comment>
<comment type="catalytic activity">
    <reaction>
        <text>Ca(2+)(in) + ATP + H2O = Ca(2+)(out) + ADP + phosphate + H(+)</text>
        <dbReference type="Rhea" id="RHEA:18105"/>
        <dbReference type="ChEBI" id="CHEBI:15377"/>
        <dbReference type="ChEBI" id="CHEBI:15378"/>
        <dbReference type="ChEBI" id="CHEBI:29108"/>
        <dbReference type="ChEBI" id="CHEBI:30616"/>
        <dbReference type="ChEBI" id="CHEBI:43474"/>
        <dbReference type="ChEBI" id="CHEBI:456216"/>
        <dbReference type="EC" id="7.2.2.10"/>
    </reaction>
</comment>
<comment type="subcellular location">
    <subcellularLocation>
        <location>Endoplasmic reticulum membrane</location>
        <topology>Multi-pass membrane protein</topology>
    </subcellularLocation>
    <subcellularLocation>
        <location evidence="1">Sarcoplasmic reticulum membrane</location>
        <topology evidence="1">Multi-pass membrane protein</topology>
    </subcellularLocation>
</comment>
<comment type="alternative products">
    <event type="alternative splicing"/>
    <isoform>
        <id>Q7PPA5-1</id>
        <name>C</name>
        <name>E</name>
        <name>D</name>
        <sequence type="displayed"/>
    </isoform>
    <isoform>
        <id>Q7PPA5-2</id>
        <name>A</name>
        <sequence type="described" ref="VSP_030291"/>
    </isoform>
    <isoform>
        <id>Q7PPA5-3</id>
        <name>B</name>
        <sequence type="described" ref="VSP_030292"/>
    </isoform>
</comment>
<comment type="similarity">
    <text evidence="4">Belongs to the cation transport ATPase (P-type) (TC 3.A.3) family.</text>
</comment>
<feature type="chain" id="PRO_0000233305" description="Calcium-transporting ATPase sarcoplasmic/endoplasmic reticulum type">
    <location>
        <begin position="1"/>
        <end position="1018"/>
    </location>
</feature>
<feature type="topological domain" description="Cytoplasmic" evidence="2">
    <location>
        <begin position="1"/>
        <end position="48"/>
    </location>
</feature>
<feature type="transmembrane region" description="Helical; Name=1" evidence="1">
    <location>
        <begin position="49"/>
        <end position="69"/>
    </location>
</feature>
<feature type="topological domain" description="Lumenal" evidence="2">
    <location>
        <begin position="70"/>
        <end position="88"/>
    </location>
</feature>
<feature type="transmembrane region" description="Helical; Name=2" evidence="1">
    <location>
        <begin position="89"/>
        <end position="109"/>
    </location>
</feature>
<feature type="topological domain" description="Cytoplasmic" evidence="2">
    <location>
        <begin position="110"/>
        <end position="252"/>
    </location>
</feature>
<feature type="transmembrane region" description="Helical; Name=3" evidence="1">
    <location>
        <begin position="253"/>
        <end position="272"/>
    </location>
</feature>
<feature type="topological domain" description="Lumenal" evidence="2">
    <location>
        <begin position="273"/>
        <end position="294"/>
    </location>
</feature>
<feature type="transmembrane region" description="Helical; Name=4" evidence="1">
    <location>
        <begin position="295"/>
        <end position="312"/>
    </location>
</feature>
<feature type="topological domain" description="Cytoplasmic" evidence="2">
    <location>
        <begin position="313"/>
        <end position="756"/>
    </location>
</feature>
<feature type="transmembrane region" description="Helical; Name=5" evidence="1">
    <location>
        <begin position="757"/>
        <end position="776"/>
    </location>
</feature>
<feature type="topological domain" description="Lumenal" evidence="2">
    <location>
        <begin position="777"/>
        <end position="786"/>
    </location>
</feature>
<feature type="transmembrane region" description="Helical; Name=6" evidence="1">
    <location>
        <begin position="787"/>
        <end position="807"/>
    </location>
</feature>
<feature type="topological domain" description="Cytoplasmic" evidence="2">
    <location>
        <begin position="808"/>
        <end position="827"/>
    </location>
</feature>
<feature type="transmembrane region" description="Helical; Name=7" evidence="1">
    <location>
        <begin position="828"/>
        <end position="850"/>
    </location>
</feature>
<feature type="topological domain" description="Lumenal" evidence="2">
    <location>
        <begin position="851"/>
        <end position="896"/>
    </location>
</feature>
<feature type="transmembrane region" description="Helical; Name=8" evidence="1">
    <location>
        <begin position="897"/>
        <end position="916"/>
    </location>
</feature>
<feature type="topological domain" description="Cytoplasmic" evidence="2">
    <location>
        <begin position="917"/>
        <end position="929"/>
    </location>
</feature>
<feature type="transmembrane region" description="Helical; Name=9" evidence="1">
    <location>
        <begin position="930"/>
        <end position="948"/>
    </location>
</feature>
<feature type="topological domain" description="Lumenal" evidence="2">
    <location>
        <begin position="949"/>
        <end position="963"/>
    </location>
</feature>
<feature type="transmembrane region" description="Helical; Name=10" evidence="1">
    <location>
        <begin position="964"/>
        <end position="984"/>
    </location>
</feature>
<feature type="topological domain" description="Cytoplasmic" evidence="2">
    <location>
        <begin position="985"/>
        <end position="1018"/>
    </location>
</feature>
<feature type="active site" description="4-aspartylphosphate intermediate" evidence="2">
    <location>
        <position position="350"/>
    </location>
</feature>
<feature type="binding site" evidence="1">
    <location>
        <position position="303"/>
    </location>
    <ligand>
        <name>Ca(2+)</name>
        <dbReference type="ChEBI" id="CHEBI:29108"/>
        <label>2</label>
    </ligand>
</feature>
<feature type="binding site" evidence="1">
    <location>
        <position position="304"/>
    </location>
    <ligand>
        <name>Ca(2+)</name>
        <dbReference type="ChEBI" id="CHEBI:29108"/>
        <label>2</label>
    </ligand>
</feature>
<feature type="binding site" evidence="1">
    <location>
        <position position="306"/>
    </location>
    <ligand>
        <name>Ca(2+)</name>
        <dbReference type="ChEBI" id="CHEBI:29108"/>
        <label>2</label>
    </ligand>
</feature>
<feature type="binding site" evidence="2">
    <location>
        <position position="308"/>
    </location>
    <ligand>
        <name>Ca(2+)</name>
        <dbReference type="ChEBI" id="CHEBI:29108"/>
        <label>2</label>
    </ligand>
</feature>
<feature type="binding site" evidence="2">
    <location>
        <position position="702"/>
    </location>
    <ligand>
        <name>Mg(2+)</name>
        <dbReference type="ChEBI" id="CHEBI:18420"/>
    </ligand>
</feature>
<feature type="binding site" evidence="2">
    <location>
        <position position="706"/>
    </location>
    <ligand>
        <name>Mg(2+)</name>
        <dbReference type="ChEBI" id="CHEBI:18420"/>
    </ligand>
</feature>
<feature type="binding site" evidence="2">
    <location>
        <position position="767"/>
    </location>
    <ligand>
        <name>Ca(2+)</name>
        <dbReference type="ChEBI" id="CHEBI:29108"/>
        <label>1</label>
    </ligand>
</feature>
<feature type="binding site" evidence="2">
    <location>
        <position position="770"/>
    </location>
    <ligand>
        <name>Ca(2+)</name>
        <dbReference type="ChEBI" id="CHEBI:29108"/>
        <label>1</label>
    </ligand>
</feature>
<feature type="binding site" evidence="2">
    <location>
        <position position="795"/>
    </location>
    <ligand>
        <name>Ca(2+)</name>
        <dbReference type="ChEBI" id="CHEBI:29108"/>
        <label>2</label>
    </ligand>
</feature>
<feature type="binding site" evidence="2">
    <location>
        <position position="798"/>
    </location>
    <ligand>
        <name>Ca(2+)</name>
        <dbReference type="ChEBI" id="CHEBI:29108"/>
        <label>1</label>
    </ligand>
</feature>
<feature type="binding site" evidence="2">
    <location>
        <position position="799"/>
    </location>
    <ligand>
        <name>Ca(2+)</name>
        <dbReference type="ChEBI" id="CHEBI:29108"/>
        <label>1</label>
    </ligand>
</feature>
<feature type="binding site" evidence="2">
    <location>
        <position position="799"/>
    </location>
    <ligand>
        <name>Ca(2+)</name>
        <dbReference type="ChEBI" id="CHEBI:29108"/>
        <label>2</label>
    </ligand>
</feature>
<feature type="binding site" evidence="2">
    <location>
        <position position="907"/>
    </location>
    <ligand>
        <name>Ca(2+)</name>
        <dbReference type="ChEBI" id="CHEBI:29108"/>
        <label>1</label>
    </ligand>
</feature>
<feature type="splice variant" id="VSP_030291" description="In isoform A." evidence="4">
    <original>GESYIKNMHGLVLAWAVFFAYIIWGP</original>
    <variation>VNPDFH</variation>
    <location>
        <begin position="993"/>
        <end position="1018"/>
    </location>
</feature>
<feature type="splice variant" id="VSP_030292" description="In isoform B." evidence="4">
    <original>GESYIKNMHGLVLAWAVFFAYIIWGP</original>
    <variation>ANEVIKTWE</variation>
    <location>
        <begin position="993"/>
        <end position="1018"/>
    </location>
</feature>
<accession>Q7PPA5</accession>
<accession>A7UU43</accession>
<accession>A7UU44</accession>
<accession>A7UU45</accession>
<evidence type="ECO:0000250" key="1"/>
<evidence type="ECO:0000250" key="2">
    <source>
        <dbReference type="UniProtKB" id="P04191"/>
    </source>
</evidence>
<evidence type="ECO:0000250" key="3">
    <source>
        <dbReference type="UniProtKB" id="P22700"/>
    </source>
</evidence>
<evidence type="ECO:0000305" key="4"/>
<keyword id="KW-0025">Alternative splicing</keyword>
<keyword id="KW-0067">ATP-binding</keyword>
<keyword id="KW-0106">Calcium</keyword>
<keyword id="KW-0109">Calcium transport</keyword>
<keyword id="KW-0256">Endoplasmic reticulum</keyword>
<keyword id="KW-0406">Ion transport</keyword>
<keyword id="KW-0460">Magnesium</keyword>
<keyword id="KW-0472">Membrane</keyword>
<keyword id="KW-0479">Metal-binding</keyword>
<keyword id="KW-0547">Nucleotide-binding</keyword>
<keyword id="KW-0597">Phosphoprotein</keyword>
<keyword id="KW-1185">Reference proteome</keyword>
<keyword id="KW-0703">Sarcoplasmic reticulum</keyword>
<keyword id="KW-1278">Translocase</keyword>
<keyword id="KW-0812">Transmembrane</keyword>
<keyword id="KW-1133">Transmembrane helix</keyword>
<keyword id="KW-0813">Transport</keyword>